<accession>B5F7R7</accession>
<feature type="chain" id="PRO_1000094919" description="Large-conductance mechanosensitive channel">
    <location>
        <begin position="1"/>
        <end position="137"/>
    </location>
</feature>
<feature type="transmembrane region" description="Helical" evidence="1">
    <location>
        <begin position="10"/>
        <end position="30"/>
    </location>
</feature>
<feature type="transmembrane region" description="Helical" evidence="1">
    <location>
        <begin position="76"/>
        <end position="96"/>
    </location>
</feature>
<proteinExistence type="inferred from homology"/>
<protein>
    <recommendedName>
        <fullName evidence="1">Large-conductance mechanosensitive channel</fullName>
    </recommendedName>
</protein>
<gene>
    <name evidence="1" type="primary">mscL</name>
    <name type="ordered locus">SeAg_B3606</name>
</gene>
<organism>
    <name type="scientific">Salmonella agona (strain SL483)</name>
    <dbReference type="NCBI Taxonomy" id="454166"/>
    <lineage>
        <taxon>Bacteria</taxon>
        <taxon>Pseudomonadati</taxon>
        <taxon>Pseudomonadota</taxon>
        <taxon>Gammaproteobacteria</taxon>
        <taxon>Enterobacterales</taxon>
        <taxon>Enterobacteriaceae</taxon>
        <taxon>Salmonella</taxon>
    </lineage>
</organism>
<comment type="function">
    <text evidence="1">Channel that opens in response to stretch forces in the membrane lipid bilayer. May participate in the regulation of osmotic pressure changes within the cell.</text>
</comment>
<comment type="subunit">
    <text evidence="1">Homopentamer.</text>
</comment>
<comment type="subcellular location">
    <subcellularLocation>
        <location evidence="1">Cell inner membrane</location>
        <topology evidence="1">Multi-pass membrane protein</topology>
    </subcellularLocation>
</comment>
<comment type="similarity">
    <text evidence="1">Belongs to the MscL family.</text>
</comment>
<name>MSCL_SALA4</name>
<reference key="1">
    <citation type="journal article" date="2011" name="J. Bacteriol.">
        <title>Comparative genomics of 28 Salmonella enterica isolates: evidence for CRISPR-mediated adaptive sublineage evolution.</title>
        <authorList>
            <person name="Fricke W.F."/>
            <person name="Mammel M.K."/>
            <person name="McDermott P.F."/>
            <person name="Tartera C."/>
            <person name="White D.G."/>
            <person name="Leclerc J.E."/>
            <person name="Ravel J."/>
            <person name="Cebula T.A."/>
        </authorList>
    </citation>
    <scope>NUCLEOTIDE SEQUENCE [LARGE SCALE GENOMIC DNA]</scope>
    <source>
        <strain>SL483</strain>
    </source>
</reference>
<evidence type="ECO:0000255" key="1">
    <source>
        <dbReference type="HAMAP-Rule" id="MF_00115"/>
    </source>
</evidence>
<dbReference type="EMBL" id="CP001138">
    <property type="protein sequence ID" value="ACH49510.1"/>
    <property type="molecule type" value="Genomic_DNA"/>
</dbReference>
<dbReference type="RefSeq" id="WP_000008119.1">
    <property type="nucleotide sequence ID" value="NC_011149.1"/>
</dbReference>
<dbReference type="SMR" id="B5F7R7"/>
<dbReference type="KEGG" id="sea:SeAg_B3606"/>
<dbReference type="HOGENOM" id="CLU_095787_0_0_6"/>
<dbReference type="Proteomes" id="UP000008819">
    <property type="component" value="Chromosome"/>
</dbReference>
<dbReference type="GO" id="GO:0005886">
    <property type="term" value="C:plasma membrane"/>
    <property type="evidence" value="ECO:0007669"/>
    <property type="project" value="UniProtKB-SubCell"/>
</dbReference>
<dbReference type="GO" id="GO:0008381">
    <property type="term" value="F:mechanosensitive monoatomic ion channel activity"/>
    <property type="evidence" value="ECO:0007669"/>
    <property type="project" value="UniProtKB-UniRule"/>
</dbReference>
<dbReference type="FunFam" id="1.10.1200.120:FF:000001">
    <property type="entry name" value="Large-conductance mechanosensitive channel"/>
    <property type="match status" value="1"/>
</dbReference>
<dbReference type="Gene3D" id="1.10.1200.120">
    <property type="entry name" value="Large-conductance mechanosensitive channel, MscL, domain 1"/>
    <property type="match status" value="1"/>
</dbReference>
<dbReference type="HAMAP" id="MF_00115">
    <property type="entry name" value="MscL"/>
    <property type="match status" value="1"/>
</dbReference>
<dbReference type="InterPro" id="IPR019823">
    <property type="entry name" value="Mechanosensitive_channel_CS"/>
</dbReference>
<dbReference type="InterPro" id="IPR001185">
    <property type="entry name" value="MS_channel"/>
</dbReference>
<dbReference type="InterPro" id="IPR037673">
    <property type="entry name" value="MSC/AndL"/>
</dbReference>
<dbReference type="InterPro" id="IPR036019">
    <property type="entry name" value="MscL_channel"/>
</dbReference>
<dbReference type="NCBIfam" id="TIGR00220">
    <property type="entry name" value="mscL"/>
    <property type="match status" value="1"/>
</dbReference>
<dbReference type="NCBIfam" id="NF001841">
    <property type="entry name" value="PRK00567.1-1"/>
    <property type="match status" value="1"/>
</dbReference>
<dbReference type="NCBIfam" id="NF001843">
    <property type="entry name" value="PRK00567.1-4"/>
    <property type="match status" value="1"/>
</dbReference>
<dbReference type="PANTHER" id="PTHR30266:SF2">
    <property type="entry name" value="LARGE-CONDUCTANCE MECHANOSENSITIVE CHANNEL"/>
    <property type="match status" value="1"/>
</dbReference>
<dbReference type="PANTHER" id="PTHR30266">
    <property type="entry name" value="MECHANOSENSITIVE CHANNEL MSCL"/>
    <property type="match status" value="1"/>
</dbReference>
<dbReference type="Pfam" id="PF01741">
    <property type="entry name" value="MscL"/>
    <property type="match status" value="1"/>
</dbReference>
<dbReference type="PRINTS" id="PR01264">
    <property type="entry name" value="MECHCHANNEL"/>
</dbReference>
<dbReference type="SUPFAM" id="SSF81330">
    <property type="entry name" value="Gated mechanosensitive channel"/>
    <property type="match status" value="1"/>
</dbReference>
<dbReference type="PROSITE" id="PS01327">
    <property type="entry name" value="MSCL"/>
    <property type="match status" value="1"/>
</dbReference>
<sequence length="137" mass="15074">MSFIKEFREFAMRGNVVDLAVGVIIGAAFGKIVSSLVADIIMPPLGLLIGGIDFKQFAFTLREAQGDIPAVVMHYGVFIQNVFDFVIVAFAIFVAIKLINRLNRKKAEEPAAPPAPSKEEVLLGEIRDLLKEQNNRS</sequence>
<keyword id="KW-0997">Cell inner membrane</keyword>
<keyword id="KW-1003">Cell membrane</keyword>
<keyword id="KW-0407">Ion channel</keyword>
<keyword id="KW-0406">Ion transport</keyword>
<keyword id="KW-0472">Membrane</keyword>
<keyword id="KW-0812">Transmembrane</keyword>
<keyword id="KW-1133">Transmembrane helix</keyword>
<keyword id="KW-0813">Transport</keyword>